<protein>
    <recommendedName>
        <fullName evidence="1">Uroporphyrinogen decarboxylase</fullName>
        <shortName evidence="1">UPD</shortName>
        <shortName evidence="1">URO-D</shortName>
        <ecNumber evidence="1">4.1.1.37</ecNumber>
    </recommendedName>
</protein>
<accession>Q4KJI4</accession>
<comment type="function">
    <text evidence="1">Catalyzes the decarboxylation of four acetate groups of uroporphyrinogen-III to yield coproporphyrinogen-III.</text>
</comment>
<comment type="catalytic activity">
    <reaction evidence="1">
        <text>uroporphyrinogen III + 4 H(+) = coproporphyrinogen III + 4 CO2</text>
        <dbReference type="Rhea" id="RHEA:19865"/>
        <dbReference type="ChEBI" id="CHEBI:15378"/>
        <dbReference type="ChEBI" id="CHEBI:16526"/>
        <dbReference type="ChEBI" id="CHEBI:57308"/>
        <dbReference type="ChEBI" id="CHEBI:57309"/>
        <dbReference type="EC" id="4.1.1.37"/>
    </reaction>
</comment>
<comment type="pathway">
    <text evidence="1">Porphyrin-containing compound metabolism; protoporphyrin-IX biosynthesis; coproporphyrinogen-III from 5-aminolevulinate: step 4/4.</text>
</comment>
<comment type="subunit">
    <text evidence="1">Homodimer.</text>
</comment>
<comment type="subcellular location">
    <subcellularLocation>
        <location evidence="1">Cytoplasm</location>
    </subcellularLocation>
</comment>
<comment type="similarity">
    <text evidence="1">Belongs to the uroporphyrinogen decarboxylase family.</text>
</comment>
<proteinExistence type="inferred from homology"/>
<keyword id="KW-0963">Cytoplasm</keyword>
<keyword id="KW-0210">Decarboxylase</keyword>
<keyword id="KW-0456">Lyase</keyword>
<keyword id="KW-0627">Porphyrin biosynthesis</keyword>
<evidence type="ECO:0000255" key="1">
    <source>
        <dbReference type="HAMAP-Rule" id="MF_00218"/>
    </source>
</evidence>
<gene>
    <name evidence="1" type="primary">hemE</name>
    <name type="ordered locus">PFL_0455</name>
</gene>
<organism>
    <name type="scientific">Pseudomonas fluorescens (strain ATCC BAA-477 / NRRL B-23932 / Pf-5)</name>
    <dbReference type="NCBI Taxonomy" id="220664"/>
    <lineage>
        <taxon>Bacteria</taxon>
        <taxon>Pseudomonadati</taxon>
        <taxon>Pseudomonadota</taxon>
        <taxon>Gammaproteobacteria</taxon>
        <taxon>Pseudomonadales</taxon>
        <taxon>Pseudomonadaceae</taxon>
        <taxon>Pseudomonas</taxon>
    </lineage>
</organism>
<sequence length="355" mass="38940">MTALKNDRFLRALLKQPVDVTPVWMMRQAGRYLPEYRASRANAGDFMSLCMNPEFACEVTLQPLDRYPQLDAAILFSDILTIPDAMGQGLYFETGEGPRFKKVVSTLADIEALPIPDPHKDLGYVMDAVSTIRRELNGRVPLIGFSGSPWTLATYMVEGGSSKDFRKSKAMLYDNPQAMHLLLDKLAQSVTAYLNGQIRAGAQAVQIFDSWGGSLSAAAYQEFSLAYMRKIVSGLIREHDGRKVPVILFTKGGGLWLESIADAGADSLGLDWTCDIGEARRRVGSKVSLQGNMDPTVLYANPQAIRSEVARILASYGKGSGHVFNLGHGITPEVKPEHAGAFLEAVHELSAQYHE</sequence>
<feature type="chain" id="PRO_1000023948" description="Uroporphyrinogen decarboxylase">
    <location>
        <begin position="1"/>
        <end position="355"/>
    </location>
</feature>
<feature type="binding site" evidence="1">
    <location>
        <begin position="27"/>
        <end position="31"/>
    </location>
    <ligand>
        <name>substrate</name>
    </ligand>
</feature>
<feature type="binding site" evidence="1">
    <location>
        <position position="78"/>
    </location>
    <ligand>
        <name>substrate</name>
    </ligand>
</feature>
<feature type="binding site" evidence="1">
    <location>
        <position position="155"/>
    </location>
    <ligand>
        <name>substrate</name>
    </ligand>
</feature>
<feature type="binding site" evidence="1">
    <location>
        <position position="210"/>
    </location>
    <ligand>
        <name>substrate</name>
    </ligand>
</feature>
<feature type="binding site" evidence="1">
    <location>
        <position position="328"/>
    </location>
    <ligand>
        <name>substrate</name>
    </ligand>
</feature>
<feature type="site" description="Transition state stabilizer" evidence="1">
    <location>
        <position position="78"/>
    </location>
</feature>
<reference key="1">
    <citation type="journal article" date="2005" name="Nat. Biotechnol.">
        <title>Complete genome sequence of the plant commensal Pseudomonas fluorescens Pf-5.</title>
        <authorList>
            <person name="Paulsen I.T."/>
            <person name="Press C.M."/>
            <person name="Ravel J."/>
            <person name="Kobayashi D.Y."/>
            <person name="Myers G.S.A."/>
            <person name="Mavrodi D.V."/>
            <person name="DeBoy R.T."/>
            <person name="Seshadri R."/>
            <person name="Ren Q."/>
            <person name="Madupu R."/>
            <person name="Dodson R.J."/>
            <person name="Durkin A.S."/>
            <person name="Brinkac L.M."/>
            <person name="Daugherty S.C."/>
            <person name="Sullivan S.A."/>
            <person name="Rosovitz M.J."/>
            <person name="Gwinn M.L."/>
            <person name="Zhou L."/>
            <person name="Schneider D.J."/>
            <person name="Cartinhour S.W."/>
            <person name="Nelson W.C."/>
            <person name="Weidman J."/>
            <person name="Watkins K."/>
            <person name="Tran K."/>
            <person name="Khouri H."/>
            <person name="Pierson E.A."/>
            <person name="Pierson L.S. III"/>
            <person name="Thomashow L.S."/>
            <person name="Loper J.E."/>
        </authorList>
    </citation>
    <scope>NUCLEOTIDE SEQUENCE [LARGE SCALE GENOMIC DNA]</scope>
    <source>
        <strain>ATCC BAA-477 / NRRL B-23932 / Pf-5</strain>
    </source>
</reference>
<name>DCUP_PSEF5</name>
<dbReference type="EC" id="4.1.1.37" evidence="1"/>
<dbReference type="EMBL" id="CP000076">
    <property type="protein sequence ID" value="AAY95864.1"/>
    <property type="molecule type" value="Genomic_DNA"/>
</dbReference>
<dbReference type="RefSeq" id="WP_011058829.1">
    <property type="nucleotide sequence ID" value="NC_004129.6"/>
</dbReference>
<dbReference type="SMR" id="Q4KJI4"/>
<dbReference type="STRING" id="220664.PFL_0455"/>
<dbReference type="GeneID" id="57473444"/>
<dbReference type="KEGG" id="pfl:PFL_0455"/>
<dbReference type="PATRIC" id="fig|220664.5.peg.466"/>
<dbReference type="eggNOG" id="COG0407">
    <property type="taxonomic scope" value="Bacteria"/>
</dbReference>
<dbReference type="HOGENOM" id="CLU_040933_0_0_6"/>
<dbReference type="UniPathway" id="UPA00251">
    <property type="reaction ID" value="UER00321"/>
</dbReference>
<dbReference type="Proteomes" id="UP000008540">
    <property type="component" value="Chromosome"/>
</dbReference>
<dbReference type="GO" id="GO:0005829">
    <property type="term" value="C:cytosol"/>
    <property type="evidence" value="ECO:0007669"/>
    <property type="project" value="TreeGrafter"/>
</dbReference>
<dbReference type="GO" id="GO:0004853">
    <property type="term" value="F:uroporphyrinogen decarboxylase activity"/>
    <property type="evidence" value="ECO:0007669"/>
    <property type="project" value="UniProtKB-UniRule"/>
</dbReference>
<dbReference type="GO" id="GO:0019353">
    <property type="term" value="P:protoporphyrinogen IX biosynthetic process from glutamate"/>
    <property type="evidence" value="ECO:0007669"/>
    <property type="project" value="TreeGrafter"/>
</dbReference>
<dbReference type="CDD" id="cd00717">
    <property type="entry name" value="URO-D"/>
    <property type="match status" value="1"/>
</dbReference>
<dbReference type="FunFam" id="3.20.20.210:FF:000001">
    <property type="entry name" value="Uroporphyrinogen decarboxylase"/>
    <property type="match status" value="1"/>
</dbReference>
<dbReference type="Gene3D" id="3.20.20.210">
    <property type="match status" value="1"/>
</dbReference>
<dbReference type="HAMAP" id="MF_00218">
    <property type="entry name" value="URO_D"/>
    <property type="match status" value="1"/>
</dbReference>
<dbReference type="InterPro" id="IPR038071">
    <property type="entry name" value="UROD/MetE-like_sf"/>
</dbReference>
<dbReference type="InterPro" id="IPR006361">
    <property type="entry name" value="Uroporphyrinogen_deCO2ase_HemE"/>
</dbReference>
<dbReference type="InterPro" id="IPR000257">
    <property type="entry name" value="Uroporphyrinogen_deCOase"/>
</dbReference>
<dbReference type="NCBIfam" id="TIGR01464">
    <property type="entry name" value="hemE"/>
    <property type="match status" value="1"/>
</dbReference>
<dbReference type="PANTHER" id="PTHR21091">
    <property type="entry name" value="METHYLTETRAHYDROFOLATE:HOMOCYSTEINE METHYLTRANSFERASE RELATED"/>
    <property type="match status" value="1"/>
</dbReference>
<dbReference type="PANTHER" id="PTHR21091:SF169">
    <property type="entry name" value="UROPORPHYRINOGEN DECARBOXYLASE"/>
    <property type="match status" value="1"/>
</dbReference>
<dbReference type="Pfam" id="PF01208">
    <property type="entry name" value="URO-D"/>
    <property type="match status" value="1"/>
</dbReference>
<dbReference type="SUPFAM" id="SSF51726">
    <property type="entry name" value="UROD/MetE-like"/>
    <property type="match status" value="1"/>
</dbReference>
<dbReference type="PROSITE" id="PS00906">
    <property type="entry name" value="UROD_1"/>
    <property type="match status" value="1"/>
</dbReference>
<dbReference type="PROSITE" id="PS00907">
    <property type="entry name" value="UROD_2"/>
    <property type="match status" value="1"/>
</dbReference>